<comment type="function">
    <text evidence="1">Associates with microtubules and may play a role in the microtubule-dependent transport of the GABA-B receptor. May play a role in JAK1 signaling and regulate microtubule cytoskeleton rearrangements (By similarity).</text>
</comment>
<comment type="subunit">
    <text evidence="1">Homodimer. Forms a complex with GABBR1 and KIF5B/kinesin-1. Interacts with JAK1 and TYK2 (By similarity).</text>
</comment>
<comment type="subcellular location">
    <subcellularLocation>
        <location evidence="1">Cytoplasm</location>
        <location evidence="1">Cytoskeleton</location>
    </subcellularLocation>
    <subcellularLocation>
        <location evidence="1">Membrane</location>
        <topology evidence="1">Peripheral membrane protein</topology>
    </subcellularLocation>
    <text evidence="1">Colocalizes with the microtubule network. Localizes to the cell body and neurites of hippocampal neurons where it accumulates in granules. Localizes to the tail and to a lower extent to the head of sperm cells (By similarity).</text>
</comment>
<comment type="PTM">
    <text evidence="1">Phosphorylated.</text>
</comment>
<comment type="similarity">
    <text evidence="5">Belongs to the JAKMIP family.</text>
</comment>
<organism>
    <name type="scientific">Bos taurus</name>
    <name type="common">Bovine</name>
    <dbReference type="NCBI Taxonomy" id="9913"/>
    <lineage>
        <taxon>Eukaryota</taxon>
        <taxon>Metazoa</taxon>
        <taxon>Chordata</taxon>
        <taxon>Craniata</taxon>
        <taxon>Vertebrata</taxon>
        <taxon>Euteleostomi</taxon>
        <taxon>Mammalia</taxon>
        <taxon>Eutheria</taxon>
        <taxon>Laurasiatheria</taxon>
        <taxon>Artiodactyla</taxon>
        <taxon>Ruminantia</taxon>
        <taxon>Pecora</taxon>
        <taxon>Bovidae</taxon>
        <taxon>Bovinae</taxon>
        <taxon>Bos</taxon>
    </lineage>
</organism>
<keyword id="KW-0175">Coiled coil</keyword>
<keyword id="KW-0963">Cytoplasm</keyword>
<keyword id="KW-0206">Cytoskeleton</keyword>
<keyword id="KW-0472">Membrane</keyword>
<keyword id="KW-0493">Microtubule</keyword>
<keyword id="KW-0597">Phosphoprotein</keyword>
<keyword id="KW-0653">Protein transport</keyword>
<keyword id="KW-1185">Reference proteome</keyword>
<keyword id="KW-0813">Transport</keyword>
<gene>
    <name type="primary">JAKMIP1</name>
</gene>
<proteinExistence type="evidence at transcript level"/>
<reference key="1">
    <citation type="submission" date="2007-07" db="EMBL/GenBank/DDBJ databases">
        <authorList>
            <consortium name="NIH - Mammalian Gene Collection (MGC) project"/>
        </authorList>
    </citation>
    <scope>NUCLEOTIDE SEQUENCE [LARGE SCALE MRNA]</scope>
    <source>
        <strain>Hereford</strain>
        <tissue>Basal ganglia</tissue>
    </source>
</reference>
<sequence length="626" mass="73271">MSKKGRSKGEKPEMEMDPVQMANEELRAKLTSIQIEFQQEKSKVGKLRERLQEAKLEREQEQRRHTAYISELRAKLHEEKTKELQALREVLIRQHEQEAARTAKIKEGELQRLQATLNVLRDGAADKVKTALLADARDEARRAFDGERLRLQQEILELKAARKQAEEALSNCMQADKTKAADLRAAYQAHQDEVHRIKRECERDIRRLMDEIKGKDRVILALEKELGVQTGQTQKLLLQKEALDEQLVQVREAERYHGSPKRELPPGIGDMAELMGVQDQHMDERDVRRFQLKIAELNSVIRKLEDRNTLLADERNELLKRSRETEVQLKPLVEKNKRMNKKNEDLLQSIQRMEEKIKNLTRENVEMKEKLSAQASLKRHTSLNDLSLTRDEQEIEFLRLQVLEQQHVIDDLSLERERLLRSRRHRGKGLKPPKKHVVETFFGFDEESVDSETLSETSCNTDRTDRAPATPEEDLDDTTTREEADLRFCQLTREYQALQRAYALLQEQVGGTLDAEREARTREQLQADLLRCQAKIEDLEKLLVEKGQDSKWVEEKQLLIRTNQDLLEKIYRLEMEENQLKNEMQDAKDQNELLEFRVLELEVRDSICCKLSNGADILFEPKLKFM</sequence>
<feature type="chain" id="PRO_0000323007" description="Janus kinase and microtubule-interacting protein 1">
    <location>
        <begin position="1"/>
        <end position="626"/>
    </location>
</feature>
<feature type="region of interest" description="Mediates association with microtubules" evidence="1">
    <location>
        <begin position="1"/>
        <end position="365"/>
    </location>
</feature>
<feature type="region of interest" description="Mediates interaction with TYK2 and GABBR1" evidence="1">
    <location>
        <begin position="365"/>
        <end position="626"/>
    </location>
</feature>
<feature type="region of interest" description="Disordered" evidence="4">
    <location>
        <begin position="452"/>
        <end position="480"/>
    </location>
</feature>
<feature type="coiled-coil region" evidence="3">
    <location>
        <begin position="19"/>
        <end position="254"/>
    </location>
</feature>
<feature type="coiled-coil region" evidence="3">
    <location>
        <begin position="284"/>
        <end position="413"/>
    </location>
</feature>
<feature type="coiled-coil region" evidence="3">
    <location>
        <begin position="490"/>
        <end position="604"/>
    </location>
</feature>
<feature type="compositionally biased region" description="Polar residues" evidence="4">
    <location>
        <begin position="452"/>
        <end position="461"/>
    </location>
</feature>
<feature type="modified residue" description="Phosphoserine" evidence="2">
    <location>
        <position position="382"/>
    </location>
</feature>
<feature type="modified residue" description="Phosphothreonine" evidence="2">
    <location>
        <position position="470"/>
    </location>
</feature>
<dbReference type="EMBL" id="BC150119">
    <property type="protein sequence ID" value="AAI50120.1"/>
    <property type="molecule type" value="mRNA"/>
</dbReference>
<dbReference type="RefSeq" id="NP_001095721.1">
    <property type="nucleotide sequence ID" value="NM_001102251.1"/>
</dbReference>
<dbReference type="RefSeq" id="XP_010804597.1">
    <property type="nucleotide sequence ID" value="XM_010806295.2"/>
</dbReference>
<dbReference type="RefSeq" id="XP_010804598.1">
    <property type="nucleotide sequence ID" value="XM_010806296.2"/>
</dbReference>
<dbReference type="RefSeq" id="XP_015327186.1">
    <property type="nucleotide sequence ID" value="XM_015471700.3"/>
</dbReference>
<dbReference type="RefSeq" id="XP_024849164.1">
    <property type="nucleotide sequence ID" value="XM_024993396.2"/>
</dbReference>
<dbReference type="RefSeq" id="XP_024849165.1">
    <property type="nucleotide sequence ID" value="XM_024993397.2"/>
</dbReference>
<dbReference type="RefSeq" id="XP_059743618.1">
    <property type="nucleotide sequence ID" value="XM_059887635.1"/>
</dbReference>
<dbReference type="SMR" id="A6QR54"/>
<dbReference type="FunCoup" id="A6QR54">
    <property type="interactions" value="56"/>
</dbReference>
<dbReference type="STRING" id="9913.ENSBTAP00000055002"/>
<dbReference type="PaxDb" id="9913-ENSBTAP00000055002"/>
<dbReference type="GeneID" id="540970"/>
<dbReference type="KEGG" id="bta:540970"/>
<dbReference type="CTD" id="152789"/>
<dbReference type="eggNOG" id="ENOG502QS6X">
    <property type="taxonomic scope" value="Eukaryota"/>
</dbReference>
<dbReference type="HOGENOM" id="CLU_020294_2_0_1"/>
<dbReference type="InParanoid" id="A6QR54"/>
<dbReference type="OrthoDB" id="6424487at2759"/>
<dbReference type="Proteomes" id="UP000009136">
    <property type="component" value="Unplaced"/>
</dbReference>
<dbReference type="GO" id="GO:0005737">
    <property type="term" value="C:cytoplasm"/>
    <property type="evidence" value="ECO:0007669"/>
    <property type="project" value="UniProtKB-KW"/>
</dbReference>
<dbReference type="GO" id="GO:0016020">
    <property type="term" value="C:membrane"/>
    <property type="evidence" value="ECO:0007669"/>
    <property type="project" value="UniProtKB-SubCell"/>
</dbReference>
<dbReference type="GO" id="GO:0005874">
    <property type="term" value="C:microtubule"/>
    <property type="evidence" value="ECO:0007669"/>
    <property type="project" value="UniProtKB-KW"/>
</dbReference>
<dbReference type="GO" id="GO:0050811">
    <property type="term" value="F:GABA receptor binding"/>
    <property type="evidence" value="ECO:0000318"/>
    <property type="project" value="GO_Central"/>
</dbReference>
<dbReference type="GO" id="GO:0019900">
    <property type="term" value="F:kinase binding"/>
    <property type="evidence" value="ECO:0007669"/>
    <property type="project" value="InterPro"/>
</dbReference>
<dbReference type="GO" id="GO:0008017">
    <property type="term" value="F:microtubule binding"/>
    <property type="evidence" value="ECO:0007669"/>
    <property type="project" value="InterPro"/>
</dbReference>
<dbReference type="GO" id="GO:0015031">
    <property type="term" value="P:protein transport"/>
    <property type="evidence" value="ECO:0007669"/>
    <property type="project" value="UniProtKB-KW"/>
</dbReference>
<dbReference type="InterPro" id="IPR024836">
    <property type="entry name" value="JAKMIP"/>
</dbReference>
<dbReference type="InterPro" id="IPR031994">
    <property type="entry name" value="JAKMIP_C"/>
</dbReference>
<dbReference type="PANTHER" id="PTHR18935">
    <property type="entry name" value="GOLGIN SUBFAMILY A MEMBER 4-LIKE ISOFORM X1"/>
    <property type="match status" value="1"/>
</dbReference>
<dbReference type="PANTHER" id="PTHR18935:SF6">
    <property type="entry name" value="JANUS KINASE AND MICROTUBULE-INTERACTING PROTEIN 1"/>
    <property type="match status" value="1"/>
</dbReference>
<dbReference type="Pfam" id="PF16034">
    <property type="entry name" value="JAKMIP_CC3"/>
    <property type="match status" value="1"/>
</dbReference>
<evidence type="ECO:0000250" key="1"/>
<evidence type="ECO:0000250" key="2">
    <source>
        <dbReference type="UniProtKB" id="Q96N16"/>
    </source>
</evidence>
<evidence type="ECO:0000255" key="3"/>
<evidence type="ECO:0000256" key="4">
    <source>
        <dbReference type="SAM" id="MobiDB-lite"/>
    </source>
</evidence>
<evidence type="ECO:0000305" key="5"/>
<accession>A6QR54</accession>
<protein>
    <recommendedName>
        <fullName>Janus kinase and microtubule-interacting protein 1</fullName>
    </recommendedName>
</protein>
<name>JKIP1_BOVIN</name>